<reference key="1">
    <citation type="journal article" date="2007" name="PLoS ONE">
        <title>A glimpse of streptococcal toxic shock syndrome from comparative genomics of S. suis 2 Chinese isolates.</title>
        <authorList>
            <person name="Chen C."/>
            <person name="Tang J."/>
            <person name="Dong W."/>
            <person name="Wang C."/>
            <person name="Feng Y."/>
            <person name="Wang J."/>
            <person name="Zheng F."/>
            <person name="Pan X."/>
            <person name="Liu D."/>
            <person name="Li M."/>
            <person name="Song Y."/>
            <person name="Zhu X."/>
            <person name="Sun H."/>
            <person name="Feng T."/>
            <person name="Guo Z."/>
            <person name="Ju A."/>
            <person name="Ge J."/>
            <person name="Dong Y."/>
            <person name="Sun W."/>
            <person name="Jiang Y."/>
            <person name="Wang J."/>
            <person name="Yan J."/>
            <person name="Yang H."/>
            <person name="Wang X."/>
            <person name="Gao G.F."/>
            <person name="Yang R."/>
            <person name="Wang J."/>
            <person name="Yu J."/>
        </authorList>
    </citation>
    <scope>NUCLEOTIDE SEQUENCE [LARGE SCALE GENOMIC DNA]</scope>
    <source>
        <strain>98HAH33</strain>
    </source>
</reference>
<comment type="function">
    <text evidence="1">The RuvA-RuvB-RuvC complex processes Holliday junction (HJ) DNA during genetic recombination and DNA repair, while the RuvA-RuvB complex plays an important role in the rescue of blocked DNA replication forks via replication fork reversal (RFR). RuvA specifically binds to HJ cruciform DNA, conferring on it an open structure. The RuvB hexamer acts as an ATP-dependent pump, pulling dsDNA into and through the RuvAB complex. RuvB forms 2 homohexamers on either side of HJ DNA bound by 1 or 2 RuvA tetramers; 4 subunits per hexamer contact DNA at a time. Coordinated motions by a converter formed by DNA-disengaged RuvB subunits stimulates ATP hydrolysis and nucleotide exchange. Immobilization of the converter enables RuvB to convert the ATP-contained energy into a lever motion, pulling 2 nucleotides of DNA out of the RuvA tetramer per ATP hydrolyzed, thus driving DNA branch migration. The RuvB motors rotate together with the DNA substrate, which together with the progressing nucleotide cycle form the mechanistic basis for DNA recombination by continuous HJ branch migration. Branch migration allows RuvC to scan DNA until it finds its consensus sequence, where it cleaves and resolves cruciform DNA.</text>
</comment>
<comment type="catalytic activity">
    <reaction evidence="1">
        <text>ATP + H2O = ADP + phosphate + H(+)</text>
        <dbReference type="Rhea" id="RHEA:13065"/>
        <dbReference type="ChEBI" id="CHEBI:15377"/>
        <dbReference type="ChEBI" id="CHEBI:15378"/>
        <dbReference type="ChEBI" id="CHEBI:30616"/>
        <dbReference type="ChEBI" id="CHEBI:43474"/>
        <dbReference type="ChEBI" id="CHEBI:456216"/>
    </reaction>
</comment>
<comment type="subunit">
    <text evidence="1">Homohexamer. Forms an RuvA(8)-RuvB(12)-Holliday junction (HJ) complex. HJ DNA is sandwiched between 2 RuvA tetramers; dsDNA enters through RuvA and exits via RuvB. An RuvB hexamer assembles on each DNA strand where it exits the tetramer. Each RuvB hexamer is contacted by two RuvA subunits (via domain III) on 2 adjacent RuvB subunits; this complex drives branch migration. In the full resolvosome a probable DNA-RuvA(4)-RuvB(12)-RuvC(2) complex forms which resolves the HJ.</text>
</comment>
<comment type="subcellular location">
    <subcellularLocation>
        <location evidence="1">Cytoplasm</location>
    </subcellularLocation>
</comment>
<comment type="domain">
    <text evidence="1">Has 3 domains, the large (RuvB-L) and small ATPase (RuvB-S) domains and the C-terminal head (RuvB-H) domain. The head domain binds DNA, while the ATPase domains jointly bind ATP, ADP or are empty depending on the state of the subunit in the translocation cycle. During a single DNA translocation step the structure of each domain remains the same, but their relative positions change.</text>
</comment>
<comment type="similarity">
    <text evidence="1">Belongs to the RuvB family.</text>
</comment>
<accession>A4VYM0</accession>
<dbReference type="EC" id="3.6.4.-" evidence="1"/>
<dbReference type="EMBL" id="CP000408">
    <property type="protein sequence ID" value="ABP91209.1"/>
    <property type="molecule type" value="Genomic_DNA"/>
</dbReference>
<dbReference type="SMR" id="A4VYM0"/>
<dbReference type="KEGG" id="ssv:SSU98_0049"/>
<dbReference type="HOGENOM" id="CLU_055599_1_0_9"/>
<dbReference type="GO" id="GO:0005737">
    <property type="term" value="C:cytoplasm"/>
    <property type="evidence" value="ECO:0007669"/>
    <property type="project" value="UniProtKB-SubCell"/>
</dbReference>
<dbReference type="GO" id="GO:0048476">
    <property type="term" value="C:Holliday junction resolvase complex"/>
    <property type="evidence" value="ECO:0007669"/>
    <property type="project" value="UniProtKB-UniRule"/>
</dbReference>
<dbReference type="GO" id="GO:0005524">
    <property type="term" value="F:ATP binding"/>
    <property type="evidence" value="ECO:0007669"/>
    <property type="project" value="UniProtKB-UniRule"/>
</dbReference>
<dbReference type="GO" id="GO:0016887">
    <property type="term" value="F:ATP hydrolysis activity"/>
    <property type="evidence" value="ECO:0007669"/>
    <property type="project" value="InterPro"/>
</dbReference>
<dbReference type="GO" id="GO:0000400">
    <property type="term" value="F:four-way junction DNA binding"/>
    <property type="evidence" value="ECO:0007669"/>
    <property type="project" value="UniProtKB-UniRule"/>
</dbReference>
<dbReference type="GO" id="GO:0009378">
    <property type="term" value="F:four-way junction helicase activity"/>
    <property type="evidence" value="ECO:0007669"/>
    <property type="project" value="InterPro"/>
</dbReference>
<dbReference type="GO" id="GO:0006310">
    <property type="term" value="P:DNA recombination"/>
    <property type="evidence" value="ECO:0007669"/>
    <property type="project" value="UniProtKB-UniRule"/>
</dbReference>
<dbReference type="GO" id="GO:0006281">
    <property type="term" value="P:DNA repair"/>
    <property type="evidence" value="ECO:0007669"/>
    <property type="project" value="UniProtKB-UniRule"/>
</dbReference>
<dbReference type="CDD" id="cd00009">
    <property type="entry name" value="AAA"/>
    <property type="match status" value="1"/>
</dbReference>
<dbReference type="Gene3D" id="1.10.8.60">
    <property type="match status" value="1"/>
</dbReference>
<dbReference type="Gene3D" id="3.40.50.300">
    <property type="entry name" value="P-loop containing nucleotide triphosphate hydrolases"/>
    <property type="match status" value="1"/>
</dbReference>
<dbReference type="Gene3D" id="1.10.10.10">
    <property type="entry name" value="Winged helix-like DNA-binding domain superfamily/Winged helix DNA-binding domain"/>
    <property type="match status" value="1"/>
</dbReference>
<dbReference type="HAMAP" id="MF_00016">
    <property type="entry name" value="DNA_HJ_migration_RuvB"/>
    <property type="match status" value="1"/>
</dbReference>
<dbReference type="InterPro" id="IPR003593">
    <property type="entry name" value="AAA+_ATPase"/>
</dbReference>
<dbReference type="InterPro" id="IPR041445">
    <property type="entry name" value="AAA_lid_4"/>
</dbReference>
<dbReference type="InterPro" id="IPR004605">
    <property type="entry name" value="DNA_helicase_Holl-junc_RuvB"/>
</dbReference>
<dbReference type="InterPro" id="IPR027417">
    <property type="entry name" value="P-loop_NTPase"/>
</dbReference>
<dbReference type="InterPro" id="IPR008824">
    <property type="entry name" value="RuvB-like_N"/>
</dbReference>
<dbReference type="InterPro" id="IPR008823">
    <property type="entry name" value="RuvB_C"/>
</dbReference>
<dbReference type="InterPro" id="IPR036388">
    <property type="entry name" value="WH-like_DNA-bd_sf"/>
</dbReference>
<dbReference type="InterPro" id="IPR036390">
    <property type="entry name" value="WH_DNA-bd_sf"/>
</dbReference>
<dbReference type="NCBIfam" id="NF000868">
    <property type="entry name" value="PRK00080.1"/>
    <property type="match status" value="1"/>
</dbReference>
<dbReference type="NCBIfam" id="TIGR00635">
    <property type="entry name" value="ruvB"/>
    <property type="match status" value="1"/>
</dbReference>
<dbReference type="PANTHER" id="PTHR42848">
    <property type="match status" value="1"/>
</dbReference>
<dbReference type="PANTHER" id="PTHR42848:SF1">
    <property type="entry name" value="HOLLIDAY JUNCTION BRANCH MIGRATION COMPLEX SUBUNIT RUVB"/>
    <property type="match status" value="1"/>
</dbReference>
<dbReference type="Pfam" id="PF17864">
    <property type="entry name" value="AAA_lid_4"/>
    <property type="match status" value="1"/>
</dbReference>
<dbReference type="Pfam" id="PF05491">
    <property type="entry name" value="RuvB_C"/>
    <property type="match status" value="1"/>
</dbReference>
<dbReference type="Pfam" id="PF05496">
    <property type="entry name" value="RuvB_N"/>
    <property type="match status" value="1"/>
</dbReference>
<dbReference type="SMART" id="SM00382">
    <property type="entry name" value="AAA"/>
    <property type="match status" value="1"/>
</dbReference>
<dbReference type="SUPFAM" id="SSF52540">
    <property type="entry name" value="P-loop containing nucleoside triphosphate hydrolases"/>
    <property type="match status" value="1"/>
</dbReference>
<dbReference type="SUPFAM" id="SSF46785">
    <property type="entry name" value="Winged helix' DNA-binding domain"/>
    <property type="match status" value="1"/>
</dbReference>
<sequence length="333" mass="37613">MTNRILDMEQMQDEEYVERTLRPQKLNEYIGQDKVKDQLKIFIEAAKLRDEALDHTLLFGPPGLGKTTMAFVIANELGVNIKQTSGPVIEKAGDLVALLNDLEPGDVLFIDEIHRMPMAVEEILYSAMEDFYIDIMIGAGEASRSVHLELPPFTLIGATTRAGMLSNPLRARFGITGHMEYYELADLTEIVERTADIFDMEITHEAAIELARRSRGTPRIANRLLKRVRDFAQIMGDGLIDDSITDKALTMLDVDREGLDYVDQKILRTMIEMYGGGPVGLNTLSVNIAEERETVEDMYEPYLIQQGFLMRTRTGRVATAKAYEHLGYPYTEK</sequence>
<protein>
    <recommendedName>
        <fullName evidence="1">Holliday junction branch migration complex subunit RuvB</fullName>
        <ecNumber evidence="1">3.6.4.-</ecNumber>
    </recommendedName>
</protein>
<organism>
    <name type="scientific">Streptococcus suis (strain 98HAH33)</name>
    <dbReference type="NCBI Taxonomy" id="391296"/>
    <lineage>
        <taxon>Bacteria</taxon>
        <taxon>Bacillati</taxon>
        <taxon>Bacillota</taxon>
        <taxon>Bacilli</taxon>
        <taxon>Lactobacillales</taxon>
        <taxon>Streptococcaceae</taxon>
        <taxon>Streptococcus</taxon>
    </lineage>
</organism>
<evidence type="ECO:0000255" key="1">
    <source>
        <dbReference type="HAMAP-Rule" id="MF_00016"/>
    </source>
</evidence>
<proteinExistence type="inferred from homology"/>
<gene>
    <name evidence="1" type="primary">ruvB</name>
    <name type="ordered locus">SSU98_0049</name>
</gene>
<name>RUVB_STRS2</name>
<keyword id="KW-0067">ATP-binding</keyword>
<keyword id="KW-0963">Cytoplasm</keyword>
<keyword id="KW-0227">DNA damage</keyword>
<keyword id="KW-0233">DNA recombination</keyword>
<keyword id="KW-0234">DNA repair</keyword>
<keyword id="KW-0238">DNA-binding</keyword>
<keyword id="KW-0378">Hydrolase</keyword>
<keyword id="KW-0547">Nucleotide-binding</keyword>
<feature type="chain" id="PRO_0000322846" description="Holliday junction branch migration complex subunit RuvB">
    <location>
        <begin position="1"/>
        <end position="333"/>
    </location>
</feature>
<feature type="region of interest" description="Large ATPase domain (RuvB-L)" evidence="1">
    <location>
        <begin position="1"/>
        <end position="182"/>
    </location>
</feature>
<feature type="region of interest" description="Small ATPAse domain (RuvB-S)" evidence="1">
    <location>
        <begin position="183"/>
        <end position="253"/>
    </location>
</feature>
<feature type="region of interest" description="Head domain (RuvB-H)" evidence="1">
    <location>
        <begin position="256"/>
        <end position="333"/>
    </location>
</feature>
<feature type="binding site" evidence="1">
    <location>
        <position position="21"/>
    </location>
    <ligand>
        <name>ATP</name>
        <dbReference type="ChEBI" id="CHEBI:30616"/>
    </ligand>
</feature>
<feature type="binding site" evidence="1">
    <location>
        <position position="22"/>
    </location>
    <ligand>
        <name>ATP</name>
        <dbReference type="ChEBI" id="CHEBI:30616"/>
    </ligand>
</feature>
<feature type="binding site" evidence="1">
    <location>
        <position position="63"/>
    </location>
    <ligand>
        <name>ATP</name>
        <dbReference type="ChEBI" id="CHEBI:30616"/>
    </ligand>
</feature>
<feature type="binding site" evidence="1">
    <location>
        <position position="66"/>
    </location>
    <ligand>
        <name>ATP</name>
        <dbReference type="ChEBI" id="CHEBI:30616"/>
    </ligand>
</feature>
<feature type="binding site" evidence="1">
    <location>
        <position position="67"/>
    </location>
    <ligand>
        <name>ATP</name>
        <dbReference type="ChEBI" id="CHEBI:30616"/>
    </ligand>
</feature>
<feature type="binding site" evidence="1">
    <location>
        <position position="67"/>
    </location>
    <ligand>
        <name>Mg(2+)</name>
        <dbReference type="ChEBI" id="CHEBI:18420"/>
    </ligand>
</feature>
<feature type="binding site" evidence="1">
    <location>
        <position position="68"/>
    </location>
    <ligand>
        <name>ATP</name>
        <dbReference type="ChEBI" id="CHEBI:30616"/>
    </ligand>
</feature>
<feature type="binding site" evidence="1">
    <location>
        <begin position="129"/>
        <end position="131"/>
    </location>
    <ligand>
        <name>ATP</name>
        <dbReference type="ChEBI" id="CHEBI:30616"/>
    </ligand>
</feature>
<feature type="binding site" evidence="1">
    <location>
        <position position="172"/>
    </location>
    <ligand>
        <name>ATP</name>
        <dbReference type="ChEBI" id="CHEBI:30616"/>
    </ligand>
</feature>
<feature type="binding site" evidence="1">
    <location>
        <position position="182"/>
    </location>
    <ligand>
        <name>ATP</name>
        <dbReference type="ChEBI" id="CHEBI:30616"/>
    </ligand>
</feature>
<feature type="binding site" evidence="1">
    <location>
        <position position="219"/>
    </location>
    <ligand>
        <name>ATP</name>
        <dbReference type="ChEBI" id="CHEBI:30616"/>
    </ligand>
</feature>
<feature type="binding site" evidence="1">
    <location>
        <position position="292"/>
    </location>
    <ligand>
        <name>DNA</name>
        <dbReference type="ChEBI" id="CHEBI:16991"/>
    </ligand>
</feature>
<feature type="binding site" evidence="1">
    <location>
        <position position="311"/>
    </location>
    <ligand>
        <name>DNA</name>
        <dbReference type="ChEBI" id="CHEBI:16991"/>
    </ligand>
</feature>
<feature type="binding site" evidence="1">
    <location>
        <position position="313"/>
    </location>
    <ligand>
        <name>DNA</name>
        <dbReference type="ChEBI" id="CHEBI:16991"/>
    </ligand>
</feature>
<feature type="binding site" evidence="1">
    <location>
        <position position="316"/>
    </location>
    <ligand>
        <name>DNA</name>
        <dbReference type="ChEBI" id="CHEBI:16991"/>
    </ligand>
</feature>